<accession>A1JHU3</accession>
<keyword id="KW-0997">Cell inner membrane</keyword>
<keyword id="KW-1003">Cell membrane</keyword>
<keyword id="KW-0472">Membrane</keyword>
<keyword id="KW-0812">Transmembrane</keyword>
<keyword id="KW-1133">Transmembrane helix</keyword>
<evidence type="ECO:0000255" key="1">
    <source>
        <dbReference type="HAMAP-Rule" id="MF_00672"/>
    </source>
</evidence>
<name>Y031_YERE8</name>
<proteinExistence type="inferred from homology"/>
<gene>
    <name type="ordered locus">YE0031</name>
</gene>
<reference key="1">
    <citation type="journal article" date="2006" name="PLoS Genet.">
        <title>The complete genome sequence and comparative genome analysis of the high pathogenicity Yersinia enterocolitica strain 8081.</title>
        <authorList>
            <person name="Thomson N.R."/>
            <person name="Howard S."/>
            <person name="Wren B.W."/>
            <person name="Holden M.T.G."/>
            <person name="Crossman L."/>
            <person name="Challis G.L."/>
            <person name="Churcher C."/>
            <person name="Mungall K."/>
            <person name="Brooks K."/>
            <person name="Chillingworth T."/>
            <person name="Feltwell T."/>
            <person name="Abdellah Z."/>
            <person name="Hauser H."/>
            <person name="Jagels K."/>
            <person name="Maddison M."/>
            <person name="Moule S."/>
            <person name="Sanders M."/>
            <person name="Whitehead S."/>
            <person name="Quail M.A."/>
            <person name="Dougan G."/>
            <person name="Parkhill J."/>
            <person name="Prentice M.B."/>
        </authorList>
    </citation>
    <scope>NUCLEOTIDE SEQUENCE [LARGE SCALE GENOMIC DNA]</scope>
    <source>
        <strain>NCTC 13174 / 8081</strain>
    </source>
</reference>
<sequence length="296" mass="33301">MASFLRFRLSASLKPYITFGRMLYTRIDKDGLTMLAGHLAYVSLLSLVPLVTVIFALFAAFPMFADISIKLKAFIFTNFMPATGDIIQNYLEQFVANSNRMTVVGTCGLIVTALLLIYSVDSVLNIIWRSKVHRSLVFSFAVYWMVLTLGPILVGASMVISSYLLSLQWLANARVDSMIDETLRLFPLLISWVSFWLLYSVVPTVRVPAQDALIGALVAALFFELGKKGFTMYITLFPSYQLIYGVLAVIPILFLWVYWSWCIVLLGAEITVTLGEYRAQRHQAITEKSPSQSQEI</sequence>
<feature type="chain" id="PRO_1000044738" description="UPF0761 membrane protein YE0031">
    <location>
        <begin position="1"/>
        <end position="296"/>
    </location>
</feature>
<feature type="transmembrane region" description="Helical" evidence="1">
    <location>
        <begin position="44"/>
        <end position="64"/>
    </location>
</feature>
<feature type="transmembrane region" description="Helical" evidence="1">
    <location>
        <begin position="67"/>
        <end position="87"/>
    </location>
</feature>
<feature type="transmembrane region" description="Helical" evidence="1">
    <location>
        <begin position="108"/>
        <end position="128"/>
    </location>
</feature>
<feature type="transmembrane region" description="Helical" evidence="1">
    <location>
        <begin position="136"/>
        <end position="156"/>
    </location>
</feature>
<feature type="transmembrane region" description="Helical" evidence="1">
    <location>
        <begin position="185"/>
        <end position="205"/>
    </location>
</feature>
<feature type="transmembrane region" description="Helical" evidence="1">
    <location>
        <begin position="212"/>
        <end position="232"/>
    </location>
</feature>
<feature type="transmembrane region" description="Helical" evidence="1">
    <location>
        <begin position="246"/>
        <end position="266"/>
    </location>
</feature>
<protein>
    <recommendedName>
        <fullName evidence="1">UPF0761 membrane protein YE0031</fullName>
    </recommendedName>
</protein>
<dbReference type="EMBL" id="AM286415">
    <property type="protein sequence ID" value="CAL10176.1"/>
    <property type="molecule type" value="Genomic_DNA"/>
</dbReference>
<dbReference type="RefSeq" id="WP_011815261.1">
    <property type="nucleotide sequence ID" value="NC_008800.1"/>
</dbReference>
<dbReference type="RefSeq" id="YP_001004428.1">
    <property type="nucleotide sequence ID" value="NC_008800.1"/>
</dbReference>
<dbReference type="KEGG" id="yen:YE0031"/>
<dbReference type="PATRIC" id="fig|393305.7.peg.121"/>
<dbReference type="eggNOG" id="COG1295">
    <property type="taxonomic scope" value="Bacteria"/>
</dbReference>
<dbReference type="HOGENOM" id="CLU_032288_0_0_6"/>
<dbReference type="OrthoDB" id="9808671at2"/>
<dbReference type="Proteomes" id="UP000000642">
    <property type="component" value="Chromosome"/>
</dbReference>
<dbReference type="GO" id="GO:0005886">
    <property type="term" value="C:plasma membrane"/>
    <property type="evidence" value="ECO:0007669"/>
    <property type="project" value="UniProtKB-SubCell"/>
</dbReference>
<dbReference type="HAMAP" id="MF_00672">
    <property type="entry name" value="UPF0761"/>
    <property type="match status" value="1"/>
</dbReference>
<dbReference type="InterPro" id="IPR023679">
    <property type="entry name" value="UPF0761_bac"/>
</dbReference>
<dbReference type="InterPro" id="IPR017039">
    <property type="entry name" value="Virul_fac_BrkB"/>
</dbReference>
<dbReference type="NCBIfam" id="NF002457">
    <property type="entry name" value="PRK01637.1"/>
    <property type="match status" value="1"/>
</dbReference>
<dbReference type="NCBIfam" id="TIGR00765">
    <property type="entry name" value="yihY_not_rbn"/>
    <property type="match status" value="1"/>
</dbReference>
<dbReference type="PANTHER" id="PTHR30213">
    <property type="entry name" value="INNER MEMBRANE PROTEIN YHJD"/>
    <property type="match status" value="1"/>
</dbReference>
<dbReference type="PANTHER" id="PTHR30213:SF0">
    <property type="entry name" value="UPF0761 MEMBRANE PROTEIN YIHY"/>
    <property type="match status" value="1"/>
</dbReference>
<dbReference type="Pfam" id="PF03631">
    <property type="entry name" value="Virul_fac_BrkB"/>
    <property type="match status" value="1"/>
</dbReference>
<dbReference type="PIRSF" id="PIRSF035875">
    <property type="entry name" value="RNase_BN"/>
    <property type="match status" value="1"/>
</dbReference>
<organism>
    <name type="scientific">Yersinia enterocolitica serotype O:8 / biotype 1B (strain NCTC 13174 / 8081)</name>
    <dbReference type="NCBI Taxonomy" id="393305"/>
    <lineage>
        <taxon>Bacteria</taxon>
        <taxon>Pseudomonadati</taxon>
        <taxon>Pseudomonadota</taxon>
        <taxon>Gammaproteobacteria</taxon>
        <taxon>Enterobacterales</taxon>
        <taxon>Yersiniaceae</taxon>
        <taxon>Yersinia</taxon>
    </lineage>
</organism>
<comment type="subcellular location">
    <subcellularLocation>
        <location evidence="1">Cell inner membrane</location>
        <topology evidence="1">Multi-pass membrane protein</topology>
    </subcellularLocation>
</comment>
<comment type="similarity">
    <text evidence="1">Belongs to the UPF0761 family.</text>
</comment>